<organism>
    <name type="scientific">Escherichia coli (strain K12)</name>
    <dbReference type="NCBI Taxonomy" id="83333"/>
    <lineage>
        <taxon>Bacteria</taxon>
        <taxon>Pseudomonadati</taxon>
        <taxon>Pseudomonadota</taxon>
        <taxon>Gammaproteobacteria</taxon>
        <taxon>Enterobacterales</taxon>
        <taxon>Enterobacteriaceae</taxon>
        <taxon>Escherichia</taxon>
    </lineage>
</organism>
<gene>
    <name evidence="2" type="primary">mgrB</name>
    <name type="synonym">yobG</name>
    <name type="ordered locus">b1826</name>
    <name type="ordered locus">JW1815</name>
</gene>
<proteinExistence type="evidence at protein level"/>
<protein>
    <recommendedName>
        <fullName evidence="2">PhoP/PhoQ regulator MgrB</fullName>
    </recommendedName>
</protein>
<name>MGRB_ECOLI</name>
<reference key="1">
    <citation type="journal article" date="1997" name="Science">
        <title>The complete genome sequence of Escherichia coli K-12.</title>
        <authorList>
            <person name="Blattner F.R."/>
            <person name="Plunkett G. III"/>
            <person name="Bloch C.A."/>
            <person name="Perna N.T."/>
            <person name="Burland V."/>
            <person name="Riley M."/>
            <person name="Collado-Vides J."/>
            <person name="Glasner J.D."/>
            <person name="Rode C.K."/>
            <person name="Mayhew G.F."/>
            <person name="Gregor J."/>
            <person name="Davis N.W."/>
            <person name="Kirkpatrick H.A."/>
            <person name="Goeden M.A."/>
            <person name="Rose D.J."/>
            <person name="Mau B."/>
            <person name="Shao Y."/>
        </authorList>
    </citation>
    <scope>NUCLEOTIDE SEQUENCE [LARGE SCALE GENOMIC DNA]</scope>
    <source>
        <strain>K12 / MG1655 / ATCC 47076</strain>
    </source>
</reference>
<reference key="2">
    <citation type="journal article" date="2006" name="Mol. Syst. Biol.">
        <title>Highly accurate genome sequences of Escherichia coli K-12 strains MG1655 and W3110.</title>
        <authorList>
            <person name="Hayashi K."/>
            <person name="Morooka N."/>
            <person name="Yamamoto Y."/>
            <person name="Fujita K."/>
            <person name="Isono K."/>
            <person name="Choi S."/>
            <person name="Ohtsubo E."/>
            <person name="Baba T."/>
            <person name="Wanner B.L."/>
            <person name="Mori H."/>
            <person name="Horiuchi T."/>
        </authorList>
    </citation>
    <scope>NUCLEOTIDE SEQUENCE [LARGE SCALE GENOMIC DNA]</scope>
    <source>
        <strain>K12 / W3110 / ATCC 27325 / DSM 5911</strain>
    </source>
</reference>
<reference key="3">
    <citation type="journal article" date="1999" name="J. Bacteriol.">
        <title>Molecular characterization of the PhoP-PhoQ two-component system in Escherichia coli K-12: identification of extracellular Mg2+-responsive promoters.</title>
        <authorList>
            <person name="Kato A."/>
            <person name="Tanabe H."/>
            <person name="Utsumi R."/>
        </authorList>
    </citation>
    <scope>INDUCTION</scope>
    <source>
        <strain>K12 / MC4100 / ATCC 35695 / DSM 6574</strain>
    </source>
</reference>
<reference key="4">
    <citation type="journal article" date="2003" name="J. Bacteriol.">
        <title>Identification and molecular characterization of the Mg2+ stimulon of Escherichia coli.</title>
        <authorList>
            <person name="Minagawa S."/>
            <person name="Ogasawara H."/>
            <person name="Kato A."/>
            <person name="Yamamoto K."/>
            <person name="Eguchi Y."/>
            <person name="Oshima T."/>
            <person name="Mori H."/>
            <person name="Ishihama A."/>
            <person name="Utsumi R."/>
        </authorList>
    </citation>
    <scope>INDUCTION</scope>
    <source>
        <strain>K12</strain>
    </source>
</reference>
<reference key="5">
    <citation type="journal article" date="2007" name="Proc. Natl. Acad. Sci. U.S.A.">
        <title>Stimulus-dependent differential regulation in the Escherichia coli PhoQ-PhoP system.</title>
        <authorList>
            <person name="Miyashiro T."/>
            <person name="Goulian M."/>
        </authorList>
    </citation>
    <scope>INDUCTION</scope>
    <source>
        <strain>K12 / MG1655 / ATCC 47076</strain>
    </source>
</reference>
<reference key="6">
    <citation type="journal article" date="2008" name="Mol. Microbiol.">
        <title>Small membrane proteins found by comparative genomics and ribosome binding site models.</title>
        <authorList>
            <person name="Hemm M.R."/>
            <person name="Paul B.J."/>
            <person name="Schneider T.D."/>
            <person name="Storz G."/>
            <person name="Rudd K.E."/>
        </authorList>
    </citation>
    <scope>INDUCTION</scope>
    <source>
        <strain>K12 / MG1655 / ATCC 47076</strain>
    </source>
</reference>
<reference key="7">
    <citation type="journal article" date="2009" name="PLoS Genet.">
        <title>Feedback inhibition in the PhoQ/PhoP signaling system by a membrane peptide.</title>
        <authorList>
            <person name="Lippa A.M."/>
            <person name="Goulian M."/>
        </authorList>
    </citation>
    <scope>FUNCTION</scope>
    <scope>PROBABLE INTERACTION WITH PHOQ</scope>
    <scope>SUBUNIT</scope>
    <scope>SUBCELLULAR LOCATION</scope>
    <scope>TOPOLOGY</scope>
    <scope>DISRUPTION PHENOTYPE</scope>
    <source>
        <strain>K12 / MG1655 / ATCC 47076</strain>
    </source>
</reference>
<reference key="8">
    <citation type="journal article" date="2010" name="J. Bacteriol.">
        <title>Small stress response proteins in Escherichia coli: proteins missed by classical proteomic studies.</title>
        <authorList>
            <person name="Hemm M.R."/>
            <person name="Paul B.J."/>
            <person name="Miranda-Rios J."/>
            <person name="Zhang A."/>
            <person name="Soltanzad N."/>
            <person name="Storz G."/>
        </authorList>
    </citation>
    <scope>INDUCTION</scope>
    <source>
        <strain>K12 / MG1655 / ATCC 47076</strain>
    </source>
</reference>
<reference key="9">
    <citation type="journal article" date="2012" name="J. Bacteriol.">
        <title>Perturbation of the oxidizing environment of the periplasm stimulates the PhoQ/PhoP system in Escherichia coli.</title>
        <authorList>
            <person name="Lippa A.M."/>
            <person name="Goulian M."/>
        </authorList>
    </citation>
    <scope>FUNCTION</scope>
    <scope>INDUCTION</scope>
    <scope>MUTAGENESIS OF CYS-16; CYS-28 AND CYS-39</scope>
    <source>
        <strain>K12 / MG1655 / ATCC 47076</strain>
    </source>
</reference>
<comment type="function">
    <text evidence="8 9">Represses PhoP/PhoQ signaling, possibly by binding to the periplasmic domain of PhoQ, altering its activity and that of downstream effector PhoP. PhoP-regulated transcription is redox-sensitive, being activated when the periplasm becomes more reducing (deletion of dsbA/dsbB, treatment with dithiothreitol). MgrB acts between DsbA/DsbB and PhoP/PhoQ in this pathway; the 2 periplasmic Cys residues of MgrB are required for its action on PhoQ, and thus PhoP.</text>
</comment>
<comment type="subunit">
    <text evidence="2 8">May form homooligomers. Probably interacts with the periplasmic domain of PhoQ.</text>
</comment>
<comment type="subcellular location">
    <subcellularLocation>
        <location evidence="11">Cell inner membrane</location>
        <topology evidence="11">Single-pass membrane protein</topology>
    </subcellularLocation>
</comment>
<comment type="induction">
    <text evidence="3 4 5 6 7 9 10">Induced by low extracellular levels of Mg(2+) via the PhoP/PhoQ two-component regulatory system (Probable) (PubMed:10464230). In exponential phase (at protein level) (PubMed:19121005). By dithiothreitol (PubMed:22267510).</text>
</comment>
<comment type="disruption phenotype">
    <text evidence="8">Induction of genes regulated by PhoP, not suppressed by a dsbA deletion or 50 uM CuSO(4).</text>
</comment>
<comment type="similarity">
    <text evidence="2">Belongs to the MgrB family.</text>
</comment>
<sequence length="47" mass="5552">MKKFRWVVLVVVVLACLLLWAQVFNMMCDQDVQFFSGICAINQFIPW</sequence>
<feature type="chain" id="PRO_0000169066" description="PhoP/PhoQ regulator MgrB">
    <location>
        <begin position="1"/>
        <end position="47"/>
    </location>
</feature>
<feature type="topological domain" description="Cytoplasmic" evidence="1">
    <location>
        <begin position="1"/>
        <end position="5"/>
    </location>
</feature>
<feature type="transmembrane region" description="Helical" evidence="2">
    <location>
        <begin position="6"/>
        <end position="26"/>
    </location>
</feature>
<feature type="topological domain" description="Periplasmic" evidence="11">
    <location>
        <begin position="27"/>
        <end position="47"/>
    </location>
</feature>
<feature type="mutagenesis site" description="Still represses PhoP-regulated transcription." evidence="9">
    <original>C</original>
    <variation>A</variation>
    <location>
        <position position="16"/>
    </location>
</feature>
<feature type="mutagenesis site" description="No longer represses PhoP-regulated transcription." evidence="9">
    <original>C</original>
    <variation>A</variation>
    <location>
        <position position="28"/>
    </location>
</feature>
<feature type="mutagenesis site" description="No longer represses PhoP-regulated transcription." evidence="9">
    <original>C</original>
    <variation>A</variation>
    <location>
        <position position="39"/>
    </location>
</feature>
<accession>P64512</accession>
<accession>P76267</accession>
<accession>Q2MB17</accession>
<evidence type="ECO:0000255" key="1"/>
<evidence type="ECO:0000255" key="2">
    <source>
        <dbReference type="HAMAP-Rule" id="MF_01596"/>
    </source>
</evidence>
<evidence type="ECO:0000269" key="3">
    <source>
    </source>
</evidence>
<evidence type="ECO:0000269" key="4">
    <source>
    </source>
</evidence>
<evidence type="ECO:0000269" key="5">
    <source>
    </source>
</evidence>
<evidence type="ECO:0000269" key="6">
    <source>
    </source>
</evidence>
<evidence type="ECO:0000269" key="7">
    <source>
    </source>
</evidence>
<evidence type="ECO:0000269" key="8">
    <source>
    </source>
</evidence>
<evidence type="ECO:0000269" key="9">
    <source>
    </source>
</evidence>
<evidence type="ECO:0000305" key="10"/>
<evidence type="ECO:0000305" key="11">
    <source>
    </source>
</evidence>
<dbReference type="EMBL" id="U00096">
    <property type="protein sequence ID" value="AAC74896.1"/>
    <property type="molecule type" value="Genomic_DNA"/>
</dbReference>
<dbReference type="EMBL" id="AP009048">
    <property type="protein sequence ID" value="BAE76539.1"/>
    <property type="molecule type" value="Genomic_DNA"/>
</dbReference>
<dbReference type="PIR" id="B64944">
    <property type="entry name" value="B64944"/>
</dbReference>
<dbReference type="RefSeq" id="NP_416340.1">
    <property type="nucleotide sequence ID" value="NC_000913.3"/>
</dbReference>
<dbReference type="RefSeq" id="WP_000714550.1">
    <property type="nucleotide sequence ID" value="NZ_STEB01000009.1"/>
</dbReference>
<dbReference type="SMR" id="P64512"/>
<dbReference type="BioGRID" id="4261732">
    <property type="interactions" value="6"/>
</dbReference>
<dbReference type="FunCoup" id="P64512">
    <property type="interactions" value="4"/>
</dbReference>
<dbReference type="STRING" id="511145.b1826"/>
<dbReference type="PaxDb" id="511145-b1826"/>
<dbReference type="EnsemblBacteria" id="AAC74896">
    <property type="protein sequence ID" value="AAC74896"/>
    <property type="gene ID" value="b1826"/>
</dbReference>
<dbReference type="GeneID" id="93776075"/>
<dbReference type="GeneID" id="946351"/>
<dbReference type="KEGG" id="ecj:JW1815"/>
<dbReference type="KEGG" id="eco:b1826"/>
<dbReference type="KEGG" id="ecoc:C3026_10405"/>
<dbReference type="PATRIC" id="fig|511145.12.peg.1903"/>
<dbReference type="EchoBASE" id="EB4126"/>
<dbReference type="eggNOG" id="ENOG50333DF">
    <property type="taxonomic scope" value="Bacteria"/>
</dbReference>
<dbReference type="HOGENOM" id="CLU_208030_1_0_6"/>
<dbReference type="InParanoid" id="P64512"/>
<dbReference type="PhylomeDB" id="P64512"/>
<dbReference type="BioCyc" id="EcoCyc:G7002-MONOMER"/>
<dbReference type="PRO" id="PR:P64512"/>
<dbReference type="Proteomes" id="UP000000625">
    <property type="component" value="Chromosome"/>
</dbReference>
<dbReference type="GO" id="GO:0005886">
    <property type="term" value="C:plasma membrane"/>
    <property type="evidence" value="ECO:0000314"/>
    <property type="project" value="UniProtKB"/>
</dbReference>
<dbReference type="GO" id="GO:0071286">
    <property type="term" value="P:cellular response to magnesium ion"/>
    <property type="evidence" value="ECO:0000315"/>
    <property type="project" value="EcoCyc"/>
</dbReference>
<dbReference type="GO" id="GO:0070298">
    <property type="term" value="P:negative regulation of phosphorelay signal transduction system"/>
    <property type="evidence" value="ECO:0000314"/>
    <property type="project" value="UniProtKB"/>
</dbReference>
<dbReference type="GO" id="GO:0010447">
    <property type="term" value="P:response to acidic pH"/>
    <property type="evidence" value="ECO:0000315"/>
    <property type="project" value="EcoCyc"/>
</dbReference>
<dbReference type="HAMAP" id="MF_01596">
    <property type="entry name" value="MgrB"/>
    <property type="match status" value="1"/>
</dbReference>
<dbReference type="InterPro" id="IPR020907">
    <property type="entry name" value="MgrB"/>
</dbReference>
<dbReference type="NCBIfam" id="NF007635">
    <property type="entry name" value="PRK10299.1"/>
    <property type="match status" value="1"/>
</dbReference>
<dbReference type="Pfam" id="PF13998">
    <property type="entry name" value="MgrB"/>
    <property type="match status" value="1"/>
</dbReference>
<keyword id="KW-0997">Cell inner membrane</keyword>
<keyword id="KW-1003">Cell membrane</keyword>
<keyword id="KW-0472">Membrane</keyword>
<keyword id="KW-1185">Reference proteome</keyword>
<keyword id="KW-0678">Repressor</keyword>
<keyword id="KW-0804">Transcription</keyword>
<keyword id="KW-0805">Transcription regulation</keyword>
<keyword id="KW-0812">Transmembrane</keyword>
<keyword id="KW-1133">Transmembrane helix</keyword>